<comment type="function">
    <text evidence="1">Transcription factor capable of interacting with purine rich repeats (GA repeats). Positively regulates transcription of transcriptional repressor Rhit/Zpf13.</text>
</comment>
<comment type="subunit">
    <text>Heterotetramer of two alpha and two beta subunits.</text>
</comment>
<comment type="subcellular location">
    <subcellularLocation>
        <location>Nucleus</location>
    </subcellularLocation>
</comment>
<comment type="tissue specificity">
    <text>Ubiquitous.</text>
</comment>
<comment type="similarity">
    <text evidence="5">Belongs to the ETS family.</text>
</comment>
<sequence length="454" mass="51344">MTKREAEELIEIEIDGTEKAECTEESIVEQTYTPAECVSQAIDINEPIGNLKKLLEPRLQCSLDAHEICLQDIQLDPDRSLFDQGVKTDGTVQLSVQVISYQGMEPKLNILEIVKTAETVEVVIDPDAHHAEAEAHLVEEAQVITLDGTKHITTISDETSEQVTRWAAALEGYRKEQERLGIPYDPIHWSTDQVLHWVVWVMKEFSMTDIDLTTLNISGRELCSLNQEDFFQRVPRGEILWSHLELLRKYVLASQEQQMNEIVTIDQPVQIIPASVPPATPTTIKVINSSAKAAKVQRSPRISGEDRSSPGNRTGNNGQIQLWQFLLELLTDKDARDCISWVGDEGEFKLNQPELVAQKWGQRKNKPTMNYEKLSRALRYYYDGDMICKVQGKRFVYKFVCDLKTLIGYSAAELNRLVIECEQKKLARMQLHGIAQPVTAVALAATSLQADKEI</sequence>
<evidence type="ECO:0000250" key="1">
    <source>
        <dbReference type="UniProtKB" id="Q06546"/>
    </source>
</evidence>
<evidence type="ECO:0000255" key="2">
    <source>
        <dbReference type="PROSITE-ProRule" id="PRU00237"/>
    </source>
</evidence>
<evidence type="ECO:0000255" key="3">
    <source>
        <dbReference type="PROSITE-ProRule" id="PRU00762"/>
    </source>
</evidence>
<evidence type="ECO:0000256" key="4">
    <source>
        <dbReference type="SAM" id="MobiDB-lite"/>
    </source>
</evidence>
<evidence type="ECO:0000305" key="5"/>
<evidence type="ECO:0007829" key="6">
    <source>
        <dbReference type="PDB" id="1AWC"/>
    </source>
</evidence>
<evidence type="ECO:0007829" key="7">
    <source>
        <dbReference type="PDB" id="1SXD"/>
    </source>
</evidence>
<evidence type="ECO:0007829" key="8">
    <source>
        <dbReference type="PDB" id="2JUO"/>
    </source>
</evidence>
<organism>
    <name type="scientific">Mus musculus</name>
    <name type="common">Mouse</name>
    <dbReference type="NCBI Taxonomy" id="10090"/>
    <lineage>
        <taxon>Eukaryota</taxon>
        <taxon>Metazoa</taxon>
        <taxon>Chordata</taxon>
        <taxon>Craniata</taxon>
        <taxon>Vertebrata</taxon>
        <taxon>Euteleostomi</taxon>
        <taxon>Mammalia</taxon>
        <taxon>Eutheria</taxon>
        <taxon>Euarchontoglires</taxon>
        <taxon>Glires</taxon>
        <taxon>Rodentia</taxon>
        <taxon>Myomorpha</taxon>
        <taxon>Muroidea</taxon>
        <taxon>Muridae</taxon>
        <taxon>Murinae</taxon>
        <taxon>Mus</taxon>
        <taxon>Mus</taxon>
    </lineage>
</organism>
<protein>
    <recommendedName>
        <fullName>GA-binding protein alpha chain</fullName>
        <shortName>GABP subunit alpha</shortName>
    </recommendedName>
</protein>
<name>GABPA_MOUSE</name>
<reference key="1">
    <citation type="journal article" date="1991" name="Science">
        <title>Identification of Ets- and notch-related subunits in GA binding protein.</title>
        <authorList>
            <person name="Lamarco K."/>
            <person name="Thompson C.C."/>
            <person name="Byers B.P."/>
            <person name="Walton E.M."/>
            <person name="McKnight S.L."/>
        </authorList>
    </citation>
    <scope>NUCLEOTIDE SEQUENCE [MRNA]</scope>
</reference>
<reference key="2">
    <citation type="journal article" date="2005" name="Science">
        <title>The transcriptional landscape of the mammalian genome.</title>
        <authorList>
            <person name="Carninci P."/>
            <person name="Kasukawa T."/>
            <person name="Katayama S."/>
            <person name="Gough J."/>
            <person name="Frith M.C."/>
            <person name="Maeda N."/>
            <person name="Oyama R."/>
            <person name="Ravasi T."/>
            <person name="Lenhard B."/>
            <person name="Wells C."/>
            <person name="Kodzius R."/>
            <person name="Shimokawa K."/>
            <person name="Bajic V.B."/>
            <person name="Brenner S.E."/>
            <person name="Batalov S."/>
            <person name="Forrest A.R."/>
            <person name="Zavolan M."/>
            <person name="Davis M.J."/>
            <person name="Wilming L.G."/>
            <person name="Aidinis V."/>
            <person name="Allen J.E."/>
            <person name="Ambesi-Impiombato A."/>
            <person name="Apweiler R."/>
            <person name="Aturaliya R.N."/>
            <person name="Bailey T.L."/>
            <person name="Bansal M."/>
            <person name="Baxter L."/>
            <person name="Beisel K.W."/>
            <person name="Bersano T."/>
            <person name="Bono H."/>
            <person name="Chalk A.M."/>
            <person name="Chiu K.P."/>
            <person name="Choudhary V."/>
            <person name="Christoffels A."/>
            <person name="Clutterbuck D.R."/>
            <person name="Crowe M.L."/>
            <person name="Dalla E."/>
            <person name="Dalrymple B.P."/>
            <person name="de Bono B."/>
            <person name="Della Gatta G."/>
            <person name="di Bernardo D."/>
            <person name="Down T."/>
            <person name="Engstrom P."/>
            <person name="Fagiolini M."/>
            <person name="Faulkner G."/>
            <person name="Fletcher C.F."/>
            <person name="Fukushima T."/>
            <person name="Furuno M."/>
            <person name="Futaki S."/>
            <person name="Gariboldi M."/>
            <person name="Georgii-Hemming P."/>
            <person name="Gingeras T.R."/>
            <person name="Gojobori T."/>
            <person name="Green R.E."/>
            <person name="Gustincich S."/>
            <person name="Harbers M."/>
            <person name="Hayashi Y."/>
            <person name="Hensch T.K."/>
            <person name="Hirokawa N."/>
            <person name="Hill D."/>
            <person name="Huminiecki L."/>
            <person name="Iacono M."/>
            <person name="Ikeo K."/>
            <person name="Iwama A."/>
            <person name="Ishikawa T."/>
            <person name="Jakt M."/>
            <person name="Kanapin A."/>
            <person name="Katoh M."/>
            <person name="Kawasawa Y."/>
            <person name="Kelso J."/>
            <person name="Kitamura H."/>
            <person name="Kitano H."/>
            <person name="Kollias G."/>
            <person name="Krishnan S.P."/>
            <person name="Kruger A."/>
            <person name="Kummerfeld S.K."/>
            <person name="Kurochkin I.V."/>
            <person name="Lareau L.F."/>
            <person name="Lazarevic D."/>
            <person name="Lipovich L."/>
            <person name="Liu J."/>
            <person name="Liuni S."/>
            <person name="McWilliam S."/>
            <person name="Madan Babu M."/>
            <person name="Madera M."/>
            <person name="Marchionni L."/>
            <person name="Matsuda H."/>
            <person name="Matsuzawa S."/>
            <person name="Miki H."/>
            <person name="Mignone F."/>
            <person name="Miyake S."/>
            <person name="Morris K."/>
            <person name="Mottagui-Tabar S."/>
            <person name="Mulder N."/>
            <person name="Nakano N."/>
            <person name="Nakauchi H."/>
            <person name="Ng P."/>
            <person name="Nilsson R."/>
            <person name="Nishiguchi S."/>
            <person name="Nishikawa S."/>
            <person name="Nori F."/>
            <person name="Ohara O."/>
            <person name="Okazaki Y."/>
            <person name="Orlando V."/>
            <person name="Pang K.C."/>
            <person name="Pavan W.J."/>
            <person name="Pavesi G."/>
            <person name="Pesole G."/>
            <person name="Petrovsky N."/>
            <person name="Piazza S."/>
            <person name="Reed J."/>
            <person name="Reid J.F."/>
            <person name="Ring B.Z."/>
            <person name="Ringwald M."/>
            <person name="Rost B."/>
            <person name="Ruan Y."/>
            <person name="Salzberg S.L."/>
            <person name="Sandelin A."/>
            <person name="Schneider C."/>
            <person name="Schoenbach C."/>
            <person name="Sekiguchi K."/>
            <person name="Semple C.A."/>
            <person name="Seno S."/>
            <person name="Sessa L."/>
            <person name="Sheng Y."/>
            <person name="Shibata Y."/>
            <person name="Shimada H."/>
            <person name="Shimada K."/>
            <person name="Silva D."/>
            <person name="Sinclair B."/>
            <person name="Sperling S."/>
            <person name="Stupka E."/>
            <person name="Sugiura K."/>
            <person name="Sultana R."/>
            <person name="Takenaka Y."/>
            <person name="Taki K."/>
            <person name="Tammoja K."/>
            <person name="Tan S.L."/>
            <person name="Tang S."/>
            <person name="Taylor M.S."/>
            <person name="Tegner J."/>
            <person name="Teichmann S.A."/>
            <person name="Ueda H.R."/>
            <person name="van Nimwegen E."/>
            <person name="Verardo R."/>
            <person name="Wei C.L."/>
            <person name="Yagi K."/>
            <person name="Yamanishi H."/>
            <person name="Zabarovsky E."/>
            <person name="Zhu S."/>
            <person name="Zimmer A."/>
            <person name="Hide W."/>
            <person name="Bult C."/>
            <person name="Grimmond S.M."/>
            <person name="Teasdale R.D."/>
            <person name="Liu E.T."/>
            <person name="Brusic V."/>
            <person name="Quackenbush J."/>
            <person name="Wahlestedt C."/>
            <person name="Mattick J.S."/>
            <person name="Hume D.A."/>
            <person name="Kai C."/>
            <person name="Sasaki D."/>
            <person name="Tomaru Y."/>
            <person name="Fukuda S."/>
            <person name="Kanamori-Katayama M."/>
            <person name="Suzuki M."/>
            <person name="Aoki J."/>
            <person name="Arakawa T."/>
            <person name="Iida J."/>
            <person name="Imamura K."/>
            <person name="Itoh M."/>
            <person name="Kato T."/>
            <person name="Kawaji H."/>
            <person name="Kawagashira N."/>
            <person name="Kawashima T."/>
            <person name="Kojima M."/>
            <person name="Kondo S."/>
            <person name="Konno H."/>
            <person name="Nakano K."/>
            <person name="Ninomiya N."/>
            <person name="Nishio T."/>
            <person name="Okada M."/>
            <person name="Plessy C."/>
            <person name="Shibata K."/>
            <person name="Shiraki T."/>
            <person name="Suzuki S."/>
            <person name="Tagami M."/>
            <person name="Waki K."/>
            <person name="Watahiki A."/>
            <person name="Okamura-Oho Y."/>
            <person name="Suzuki H."/>
            <person name="Kawai J."/>
            <person name="Hayashizaki Y."/>
        </authorList>
    </citation>
    <scope>NUCLEOTIDE SEQUENCE [LARGE SCALE MRNA]</scope>
    <source>
        <strain>C57BL/6J</strain>
        <tissue>Bone marrow</tissue>
        <tissue>Egg</tissue>
        <tissue>Liver</tissue>
    </source>
</reference>
<reference key="3">
    <citation type="submission" date="2005-07" db="EMBL/GenBank/DDBJ databases">
        <authorList>
            <person name="Mural R.J."/>
            <person name="Adams M.D."/>
            <person name="Myers E.W."/>
            <person name="Smith H.O."/>
            <person name="Venter J.C."/>
        </authorList>
    </citation>
    <scope>NUCLEOTIDE SEQUENCE [LARGE SCALE GENOMIC DNA]</scope>
</reference>
<reference key="4">
    <citation type="journal article" date="2004" name="Genome Res.">
        <title>The status, quality, and expansion of the NIH full-length cDNA project: the Mammalian Gene Collection (MGC).</title>
        <authorList>
            <consortium name="The MGC Project Team"/>
        </authorList>
    </citation>
    <scope>NUCLEOTIDE SEQUENCE [LARGE SCALE MRNA]</scope>
    <source>
        <strain>C57BL/6J</strain>
        <tissue>Brain</tissue>
    </source>
</reference>
<reference key="5">
    <citation type="journal article" date="2010" name="Cell">
        <title>A tissue-specific atlas of mouse protein phosphorylation and expression.</title>
        <authorList>
            <person name="Huttlin E.L."/>
            <person name="Jedrychowski M.P."/>
            <person name="Elias J.E."/>
            <person name="Goswami T."/>
            <person name="Rad R."/>
            <person name="Beausoleil S.A."/>
            <person name="Villen J."/>
            <person name="Haas W."/>
            <person name="Sowa M.E."/>
            <person name="Gygi S.P."/>
        </authorList>
    </citation>
    <scope>IDENTIFICATION BY MASS SPECTROMETRY [LARGE SCALE ANALYSIS]</scope>
    <source>
        <tissue>Heart</tissue>
        <tissue>Lung</tissue>
        <tissue>Spleen</tissue>
        <tissue>Testis</tissue>
    </source>
</reference>
<reference key="6">
    <citation type="journal article" date="1998" name="Science">
        <title>The structure of GABPalpha/beta: an ETS domain-ankyrin repeat heterodimer bound to DNA.</title>
        <authorList>
            <person name="Batchelor A.H."/>
            <person name="Piper D.E."/>
            <person name="de la Brousse F.C."/>
            <person name="McKnight S.L."/>
            <person name="Wolberger C."/>
        </authorList>
    </citation>
    <scope>X-RAY CRYSTALLOGRAPHY (2.15 ANGSTROMS) OF 320-320</scope>
</reference>
<dbReference type="EMBL" id="M74515">
    <property type="protein sequence ID" value="AAA53030.1"/>
    <property type="molecule type" value="mRNA"/>
</dbReference>
<dbReference type="EMBL" id="AK139916">
    <property type="protein sequence ID" value="BAE24181.1"/>
    <property type="molecule type" value="mRNA"/>
</dbReference>
<dbReference type="EMBL" id="AK145446">
    <property type="protein sequence ID" value="BAE26442.1"/>
    <property type="molecule type" value="mRNA"/>
</dbReference>
<dbReference type="EMBL" id="AK145838">
    <property type="protein sequence ID" value="BAE26687.1"/>
    <property type="molecule type" value="mRNA"/>
</dbReference>
<dbReference type="EMBL" id="AK148087">
    <property type="protein sequence ID" value="BAE28337.1"/>
    <property type="molecule type" value="mRNA"/>
</dbReference>
<dbReference type="EMBL" id="AK150455">
    <property type="protein sequence ID" value="BAE29575.1"/>
    <property type="molecule type" value="mRNA"/>
</dbReference>
<dbReference type="EMBL" id="CH466521">
    <property type="protein sequence ID" value="EDK98317.1"/>
    <property type="molecule type" value="Genomic_DNA"/>
</dbReference>
<dbReference type="EMBL" id="BC052448">
    <property type="protein sequence ID" value="AAH52448.1"/>
    <property type="molecule type" value="mRNA"/>
</dbReference>
<dbReference type="CCDS" id="CCDS28284.1"/>
<dbReference type="PIR" id="A40858">
    <property type="entry name" value="A40858"/>
</dbReference>
<dbReference type="RefSeq" id="NP_001403735.1">
    <property type="nucleotide sequence ID" value="NM_001416806.1"/>
</dbReference>
<dbReference type="RefSeq" id="NP_001403736.1">
    <property type="nucleotide sequence ID" value="NM_001416807.1"/>
</dbReference>
<dbReference type="RefSeq" id="NP_032091.2">
    <property type="nucleotide sequence ID" value="NM_008065.2"/>
</dbReference>
<dbReference type="RefSeq" id="XP_006522970.1">
    <property type="nucleotide sequence ID" value="XM_006522907.2"/>
</dbReference>
<dbReference type="PDB" id="1AWC">
    <property type="method" value="X-ray"/>
    <property type="resolution" value="2.15 A"/>
    <property type="chains" value="A=320-429"/>
</dbReference>
<dbReference type="PDB" id="1SXD">
    <property type="method" value="NMR"/>
    <property type="chains" value="A=168-254"/>
</dbReference>
<dbReference type="PDB" id="2JUO">
    <property type="method" value="NMR"/>
    <property type="chains" value="A=35-121"/>
</dbReference>
<dbReference type="PDBsum" id="1AWC"/>
<dbReference type="PDBsum" id="1SXD"/>
<dbReference type="PDBsum" id="2JUO"/>
<dbReference type="BMRB" id="Q00422"/>
<dbReference type="SMR" id="Q00422"/>
<dbReference type="BioGRID" id="199795">
    <property type="interactions" value="2"/>
</dbReference>
<dbReference type="DIP" id="DIP-156N"/>
<dbReference type="FunCoup" id="Q00422">
    <property type="interactions" value="5032"/>
</dbReference>
<dbReference type="MINT" id="Q00422"/>
<dbReference type="STRING" id="10090.ENSMUSP00000009120"/>
<dbReference type="GlyGen" id="Q00422">
    <property type="glycosylation" value="2 sites, 1 O-linked glycan (2 sites)"/>
</dbReference>
<dbReference type="iPTMnet" id="Q00422"/>
<dbReference type="PhosphoSitePlus" id="Q00422"/>
<dbReference type="SwissPalm" id="Q00422"/>
<dbReference type="PaxDb" id="10090-ENSMUSP00000009120"/>
<dbReference type="PeptideAtlas" id="Q00422"/>
<dbReference type="ProteomicsDB" id="273409"/>
<dbReference type="Pumba" id="Q00422"/>
<dbReference type="Antibodypedia" id="919">
    <property type="antibodies" value="411 antibodies from 32 providers"/>
</dbReference>
<dbReference type="DNASU" id="14390"/>
<dbReference type="Ensembl" id="ENSMUST00000009120.8">
    <property type="protein sequence ID" value="ENSMUSP00000009120.8"/>
    <property type="gene ID" value="ENSMUSG00000008976.17"/>
</dbReference>
<dbReference type="Ensembl" id="ENSMUST00000114184.8">
    <property type="protein sequence ID" value="ENSMUSP00000109822.2"/>
    <property type="gene ID" value="ENSMUSG00000008976.17"/>
</dbReference>
<dbReference type="GeneID" id="14390"/>
<dbReference type="KEGG" id="mmu:14390"/>
<dbReference type="UCSC" id="uc007ztj.1">
    <property type="organism name" value="mouse"/>
</dbReference>
<dbReference type="AGR" id="MGI:95610"/>
<dbReference type="CTD" id="2551"/>
<dbReference type="MGI" id="MGI:95610">
    <property type="gene designation" value="Gabpa"/>
</dbReference>
<dbReference type="VEuPathDB" id="HostDB:ENSMUSG00000008976"/>
<dbReference type="eggNOG" id="KOG3806">
    <property type="taxonomic scope" value="Eukaryota"/>
</dbReference>
<dbReference type="GeneTree" id="ENSGT00940000155799"/>
<dbReference type="HOGENOM" id="CLU_037064_0_0_1"/>
<dbReference type="InParanoid" id="Q00422"/>
<dbReference type="OMA" id="LVNERKW"/>
<dbReference type="OrthoDB" id="10067219at2759"/>
<dbReference type="PhylomeDB" id="Q00422"/>
<dbReference type="TreeFam" id="TF350537"/>
<dbReference type="Reactome" id="R-MMU-2151201">
    <property type="pathway name" value="Transcriptional activation of mitochondrial biogenesis"/>
</dbReference>
<dbReference type="BioGRID-ORCS" id="14390">
    <property type="hits" value="21 hits in 82 CRISPR screens"/>
</dbReference>
<dbReference type="ChiTaRS" id="Gabpa">
    <property type="organism name" value="mouse"/>
</dbReference>
<dbReference type="EvolutionaryTrace" id="Q00422"/>
<dbReference type="PRO" id="PR:Q00422"/>
<dbReference type="Proteomes" id="UP000000589">
    <property type="component" value="Chromosome 16"/>
</dbReference>
<dbReference type="RNAct" id="Q00422">
    <property type="molecule type" value="protein"/>
</dbReference>
<dbReference type="Bgee" id="ENSMUSG00000008976">
    <property type="expression patterns" value="Expressed in undifferentiated genital tubercle and 281 other cell types or tissues"/>
</dbReference>
<dbReference type="GO" id="GO:0000785">
    <property type="term" value="C:chromatin"/>
    <property type="evidence" value="ECO:0007669"/>
    <property type="project" value="Ensembl"/>
</dbReference>
<dbReference type="GO" id="GO:0005654">
    <property type="term" value="C:nucleoplasm"/>
    <property type="evidence" value="ECO:0007669"/>
    <property type="project" value="Ensembl"/>
</dbReference>
<dbReference type="GO" id="GO:0005634">
    <property type="term" value="C:nucleus"/>
    <property type="evidence" value="ECO:0000314"/>
    <property type="project" value="MGI"/>
</dbReference>
<dbReference type="GO" id="GO:0003682">
    <property type="term" value="F:chromatin binding"/>
    <property type="evidence" value="ECO:0000314"/>
    <property type="project" value="MGI"/>
</dbReference>
<dbReference type="GO" id="GO:0001228">
    <property type="term" value="F:DNA-binding transcription activator activity, RNA polymerase II-specific"/>
    <property type="evidence" value="ECO:0007669"/>
    <property type="project" value="Ensembl"/>
</dbReference>
<dbReference type="GO" id="GO:0000978">
    <property type="term" value="F:RNA polymerase II cis-regulatory region sequence-specific DNA binding"/>
    <property type="evidence" value="ECO:0000314"/>
    <property type="project" value="MGI"/>
</dbReference>
<dbReference type="GO" id="GO:0000976">
    <property type="term" value="F:transcription cis-regulatory region binding"/>
    <property type="evidence" value="ECO:0000266"/>
    <property type="project" value="MGI"/>
</dbReference>
<dbReference type="GO" id="GO:0001825">
    <property type="term" value="P:blastocyst formation"/>
    <property type="evidence" value="ECO:0000315"/>
    <property type="project" value="MGI"/>
</dbReference>
<dbReference type="GO" id="GO:0001701">
    <property type="term" value="P:in utero embryonic development"/>
    <property type="evidence" value="ECO:0000315"/>
    <property type="project" value="MGI"/>
</dbReference>
<dbReference type="GO" id="GO:0045653">
    <property type="term" value="P:negative regulation of megakaryocyte differentiation"/>
    <property type="evidence" value="ECO:0000315"/>
    <property type="project" value="MGI"/>
</dbReference>
<dbReference type="GO" id="GO:0000122">
    <property type="term" value="P:negative regulation of transcription by RNA polymerase II"/>
    <property type="evidence" value="ECO:0000315"/>
    <property type="project" value="MGI"/>
</dbReference>
<dbReference type="GO" id="GO:0045944">
    <property type="term" value="P:positive regulation of transcription by RNA polymerase II"/>
    <property type="evidence" value="ECO:0000266"/>
    <property type="project" value="MGI"/>
</dbReference>
<dbReference type="GO" id="GO:0006357">
    <property type="term" value="P:regulation of transcription by RNA polymerase II"/>
    <property type="evidence" value="ECO:0000314"/>
    <property type="project" value="MGI"/>
</dbReference>
<dbReference type="CDD" id="cd08534">
    <property type="entry name" value="SAM_PNT-GABP-alpha"/>
    <property type="match status" value="1"/>
</dbReference>
<dbReference type="CDD" id="cd17039">
    <property type="entry name" value="Ubl_ubiquitin_like"/>
    <property type="match status" value="1"/>
</dbReference>
<dbReference type="FunFam" id="3.10.20.90:FF:000110">
    <property type="entry name" value="GA-binding protein alpha chain isoform X1"/>
    <property type="match status" value="1"/>
</dbReference>
<dbReference type="FunFam" id="1.10.10.10:FF:000200">
    <property type="entry name" value="GA-binding protein alpha chain, putative"/>
    <property type="match status" value="1"/>
</dbReference>
<dbReference type="FunFam" id="1.10.150.50:FF:000039">
    <property type="entry name" value="GA-binding protein alpha chain, putative"/>
    <property type="match status" value="1"/>
</dbReference>
<dbReference type="Gene3D" id="3.10.20.90">
    <property type="entry name" value="Phosphatidylinositol 3-kinase Catalytic Subunit, Chain A, domain 1"/>
    <property type="match status" value="1"/>
</dbReference>
<dbReference type="Gene3D" id="1.10.150.50">
    <property type="entry name" value="Transcription Factor, Ets-1"/>
    <property type="match status" value="1"/>
</dbReference>
<dbReference type="Gene3D" id="1.10.10.10">
    <property type="entry name" value="Winged helix-like DNA-binding domain superfamily/Winged helix DNA-binding domain"/>
    <property type="match status" value="1"/>
</dbReference>
<dbReference type="InterPro" id="IPR000418">
    <property type="entry name" value="Ets_dom"/>
</dbReference>
<dbReference type="InterPro" id="IPR046328">
    <property type="entry name" value="ETS_fam"/>
</dbReference>
<dbReference type="InterPro" id="IPR024668">
    <property type="entry name" value="GABP_asu_N"/>
</dbReference>
<dbReference type="InterPro" id="IPR003118">
    <property type="entry name" value="Pointed_dom"/>
</dbReference>
<dbReference type="InterPro" id="IPR013761">
    <property type="entry name" value="SAM/pointed_sf"/>
</dbReference>
<dbReference type="InterPro" id="IPR016312">
    <property type="entry name" value="TF_GA-bd_asu"/>
</dbReference>
<dbReference type="InterPro" id="IPR029071">
    <property type="entry name" value="Ubiquitin-like_domsf"/>
</dbReference>
<dbReference type="InterPro" id="IPR036388">
    <property type="entry name" value="WH-like_DNA-bd_sf"/>
</dbReference>
<dbReference type="InterPro" id="IPR036390">
    <property type="entry name" value="WH_DNA-bd_sf"/>
</dbReference>
<dbReference type="PANTHER" id="PTHR11849">
    <property type="entry name" value="ETS"/>
    <property type="match status" value="1"/>
</dbReference>
<dbReference type="PANTHER" id="PTHR11849:SF195">
    <property type="entry name" value="GA-BINDING PROTEIN ALPHA CHAIN"/>
    <property type="match status" value="1"/>
</dbReference>
<dbReference type="Pfam" id="PF00178">
    <property type="entry name" value="Ets"/>
    <property type="match status" value="1"/>
</dbReference>
<dbReference type="Pfam" id="PF11620">
    <property type="entry name" value="GABP-alpha"/>
    <property type="match status" value="1"/>
</dbReference>
<dbReference type="Pfam" id="PF02198">
    <property type="entry name" value="SAM_PNT"/>
    <property type="match status" value="1"/>
</dbReference>
<dbReference type="PIRSF" id="PIRSF001703">
    <property type="entry name" value="GABP_alpha"/>
    <property type="match status" value="1"/>
</dbReference>
<dbReference type="PRINTS" id="PR00454">
    <property type="entry name" value="ETSDOMAIN"/>
</dbReference>
<dbReference type="SMART" id="SM00413">
    <property type="entry name" value="ETS"/>
    <property type="match status" value="1"/>
</dbReference>
<dbReference type="SMART" id="SM00251">
    <property type="entry name" value="SAM_PNT"/>
    <property type="match status" value="1"/>
</dbReference>
<dbReference type="SUPFAM" id="SSF47769">
    <property type="entry name" value="SAM/Pointed domain"/>
    <property type="match status" value="1"/>
</dbReference>
<dbReference type="SUPFAM" id="SSF54236">
    <property type="entry name" value="Ubiquitin-like"/>
    <property type="match status" value="1"/>
</dbReference>
<dbReference type="SUPFAM" id="SSF46785">
    <property type="entry name" value="Winged helix' DNA-binding domain"/>
    <property type="match status" value="1"/>
</dbReference>
<dbReference type="PROSITE" id="PS00345">
    <property type="entry name" value="ETS_DOMAIN_1"/>
    <property type="match status" value="1"/>
</dbReference>
<dbReference type="PROSITE" id="PS00346">
    <property type="entry name" value="ETS_DOMAIN_2"/>
    <property type="match status" value="1"/>
</dbReference>
<dbReference type="PROSITE" id="PS50061">
    <property type="entry name" value="ETS_DOMAIN_3"/>
    <property type="match status" value="1"/>
</dbReference>
<dbReference type="PROSITE" id="PS51433">
    <property type="entry name" value="PNT"/>
    <property type="match status" value="1"/>
</dbReference>
<gene>
    <name type="primary">Gabpa</name>
    <name type="synonym">E4tf1a</name>
</gene>
<proteinExistence type="evidence at protein level"/>
<feature type="chain" id="PRO_0000204128" description="GA-binding protein alpha chain">
    <location>
        <begin position="1"/>
        <end position="454"/>
    </location>
</feature>
<feature type="domain" description="PNT" evidence="3">
    <location>
        <begin position="168"/>
        <end position="251"/>
    </location>
</feature>
<feature type="DNA-binding region" description="ETS" evidence="2">
    <location>
        <begin position="320"/>
        <end position="400"/>
    </location>
</feature>
<feature type="region of interest" description="Disordered" evidence="4">
    <location>
        <begin position="295"/>
        <end position="316"/>
    </location>
</feature>
<feature type="modified residue" description="Phosphoserine" evidence="1">
    <location>
        <position position="303"/>
    </location>
</feature>
<feature type="sequence conflict" description="In Ref. 1; AAA53030." evidence="5" ref="1">
    <original>H</original>
    <variation>R</variation>
    <location>
        <position position="188"/>
    </location>
</feature>
<feature type="strand" evidence="8">
    <location>
        <begin position="36"/>
        <end position="47"/>
    </location>
</feature>
<feature type="helix" evidence="8">
    <location>
        <begin position="48"/>
        <end position="50"/>
    </location>
</feature>
<feature type="helix" evidence="8">
    <location>
        <begin position="51"/>
        <end position="54"/>
    </location>
</feature>
<feature type="helix" evidence="8">
    <location>
        <begin position="56"/>
        <end position="59"/>
    </location>
</feature>
<feature type="strand" evidence="8">
    <location>
        <begin position="67"/>
        <end position="70"/>
    </location>
</feature>
<feature type="turn" evidence="8">
    <location>
        <begin position="81"/>
        <end position="83"/>
    </location>
</feature>
<feature type="strand" evidence="8">
    <location>
        <begin position="90"/>
        <end position="99"/>
    </location>
</feature>
<feature type="strand" evidence="8">
    <location>
        <begin position="107"/>
        <end position="115"/>
    </location>
</feature>
<feature type="helix" evidence="7">
    <location>
        <begin position="168"/>
        <end position="177"/>
    </location>
</feature>
<feature type="turn" evidence="7">
    <location>
        <begin position="178"/>
        <end position="180"/>
    </location>
</feature>
<feature type="helix" evidence="7">
    <location>
        <begin position="186"/>
        <end position="188"/>
    </location>
</feature>
<feature type="helix" evidence="7">
    <location>
        <begin position="191"/>
        <end position="204"/>
    </location>
</feature>
<feature type="helix" evidence="7">
    <location>
        <begin position="213"/>
        <end position="215"/>
    </location>
</feature>
<feature type="helix" evidence="7">
    <location>
        <begin position="219"/>
        <end position="224"/>
    </location>
</feature>
<feature type="helix" evidence="7">
    <location>
        <begin position="227"/>
        <end position="233"/>
    </location>
</feature>
<feature type="helix" evidence="7">
    <location>
        <begin position="238"/>
        <end position="249"/>
    </location>
</feature>
<feature type="turn" evidence="7">
    <location>
        <begin position="250"/>
        <end position="252"/>
    </location>
</feature>
<feature type="helix" evidence="6">
    <location>
        <begin position="322"/>
        <end position="330"/>
    </location>
</feature>
<feature type="turn" evidence="6">
    <location>
        <begin position="333"/>
        <end position="338"/>
    </location>
</feature>
<feature type="strand" evidence="6">
    <location>
        <begin position="339"/>
        <end position="341"/>
    </location>
</feature>
<feature type="strand" evidence="6">
    <location>
        <begin position="343"/>
        <end position="349"/>
    </location>
</feature>
<feature type="helix" evidence="6">
    <location>
        <begin position="353"/>
        <end position="364"/>
    </location>
</feature>
<feature type="helix" evidence="6">
    <location>
        <begin position="371"/>
        <end position="379"/>
    </location>
</feature>
<feature type="helix" evidence="6">
    <location>
        <begin position="380"/>
        <end position="383"/>
    </location>
</feature>
<feature type="strand" evidence="6">
    <location>
        <begin position="384"/>
        <end position="389"/>
    </location>
</feature>
<feature type="strand" evidence="6">
    <location>
        <begin position="396"/>
        <end position="399"/>
    </location>
</feature>
<feature type="helix" evidence="6">
    <location>
        <begin position="403"/>
        <end position="406"/>
    </location>
</feature>
<feature type="helix" evidence="6">
    <location>
        <begin position="411"/>
        <end position="428"/>
    </location>
</feature>
<keyword id="KW-0002">3D-structure</keyword>
<keyword id="KW-0238">DNA-binding</keyword>
<keyword id="KW-0539">Nucleus</keyword>
<keyword id="KW-0597">Phosphoprotein</keyword>
<keyword id="KW-1185">Reference proteome</keyword>
<keyword id="KW-0804">Transcription</keyword>
<keyword id="KW-0805">Transcription regulation</keyword>
<accession>Q00422</accession>
<accession>Q7TT22</accession>